<dbReference type="EMBL" id="CP000647">
    <property type="protein sequence ID" value="ABR79102.1"/>
    <property type="molecule type" value="Genomic_DNA"/>
</dbReference>
<dbReference type="RefSeq" id="WP_001138115.1">
    <property type="nucleotide sequence ID" value="NC_009648.1"/>
</dbReference>
<dbReference type="SMR" id="A6TEW8"/>
<dbReference type="STRING" id="272620.KPN_03715"/>
<dbReference type="jPOST" id="A6TEW8"/>
<dbReference type="PaxDb" id="272620-KPN_03715"/>
<dbReference type="EnsemblBacteria" id="ABR79102">
    <property type="protein sequence ID" value="ABR79102"/>
    <property type="gene ID" value="KPN_03715"/>
</dbReference>
<dbReference type="GeneID" id="97603665"/>
<dbReference type="KEGG" id="kpn:KPN_03715"/>
<dbReference type="HOGENOM" id="CLU_144911_0_1_6"/>
<dbReference type="Proteomes" id="UP000000265">
    <property type="component" value="Chromosome"/>
</dbReference>
<dbReference type="GO" id="GO:0005737">
    <property type="term" value="C:cytoplasm"/>
    <property type="evidence" value="ECO:0007669"/>
    <property type="project" value="UniProtKB-ARBA"/>
</dbReference>
<dbReference type="GO" id="GO:0015935">
    <property type="term" value="C:small ribosomal subunit"/>
    <property type="evidence" value="ECO:0007669"/>
    <property type="project" value="InterPro"/>
</dbReference>
<dbReference type="GO" id="GO:0019843">
    <property type="term" value="F:rRNA binding"/>
    <property type="evidence" value="ECO:0007669"/>
    <property type="project" value="UniProtKB-UniRule"/>
</dbReference>
<dbReference type="GO" id="GO:0003735">
    <property type="term" value="F:structural constituent of ribosome"/>
    <property type="evidence" value="ECO:0007669"/>
    <property type="project" value="InterPro"/>
</dbReference>
<dbReference type="GO" id="GO:0000028">
    <property type="term" value="P:ribosomal small subunit assembly"/>
    <property type="evidence" value="ECO:0007669"/>
    <property type="project" value="TreeGrafter"/>
</dbReference>
<dbReference type="GO" id="GO:0006412">
    <property type="term" value="P:translation"/>
    <property type="evidence" value="ECO:0007669"/>
    <property type="project" value="UniProtKB-UniRule"/>
</dbReference>
<dbReference type="FunFam" id="3.30.860.10:FF:000001">
    <property type="entry name" value="30S ribosomal protein S19"/>
    <property type="match status" value="1"/>
</dbReference>
<dbReference type="Gene3D" id="3.30.860.10">
    <property type="entry name" value="30s Ribosomal Protein S19, Chain A"/>
    <property type="match status" value="1"/>
</dbReference>
<dbReference type="HAMAP" id="MF_00531">
    <property type="entry name" value="Ribosomal_uS19"/>
    <property type="match status" value="1"/>
</dbReference>
<dbReference type="InterPro" id="IPR002222">
    <property type="entry name" value="Ribosomal_uS19"/>
</dbReference>
<dbReference type="InterPro" id="IPR005732">
    <property type="entry name" value="Ribosomal_uS19_bac-type"/>
</dbReference>
<dbReference type="InterPro" id="IPR020934">
    <property type="entry name" value="Ribosomal_uS19_CS"/>
</dbReference>
<dbReference type="InterPro" id="IPR023575">
    <property type="entry name" value="Ribosomal_uS19_SF"/>
</dbReference>
<dbReference type="NCBIfam" id="TIGR01050">
    <property type="entry name" value="rpsS_bact"/>
    <property type="match status" value="1"/>
</dbReference>
<dbReference type="PANTHER" id="PTHR11880">
    <property type="entry name" value="RIBOSOMAL PROTEIN S19P FAMILY MEMBER"/>
    <property type="match status" value="1"/>
</dbReference>
<dbReference type="PANTHER" id="PTHR11880:SF8">
    <property type="entry name" value="SMALL RIBOSOMAL SUBUNIT PROTEIN US19M"/>
    <property type="match status" value="1"/>
</dbReference>
<dbReference type="Pfam" id="PF00203">
    <property type="entry name" value="Ribosomal_S19"/>
    <property type="match status" value="1"/>
</dbReference>
<dbReference type="PIRSF" id="PIRSF002144">
    <property type="entry name" value="Ribosomal_S19"/>
    <property type="match status" value="1"/>
</dbReference>
<dbReference type="PRINTS" id="PR00975">
    <property type="entry name" value="RIBOSOMALS19"/>
</dbReference>
<dbReference type="SUPFAM" id="SSF54570">
    <property type="entry name" value="Ribosomal protein S19"/>
    <property type="match status" value="1"/>
</dbReference>
<dbReference type="PROSITE" id="PS00323">
    <property type="entry name" value="RIBOSOMAL_S19"/>
    <property type="match status" value="1"/>
</dbReference>
<protein>
    <recommendedName>
        <fullName evidence="1">Small ribosomal subunit protein uS19</fullName>
    </recommendedName>
    <alternativeName>
        <fullName evidence="2">30S ribosomal protein S19</fullName>
    </alternativeName>
</protein>
<keyword id="KW-0687">Ribonucleoprotein</keyword>
<keyword id="KW-0689">Ribosomal protein</keyword>
<keyword id="KW-0694">RNA-binding</keyword>
<keyword id="KW-0699">rRNA-binding</keyword>
<name>RS19_KLEP7</name>
<reference key="1">
    <citation type="submission" date="2006-09" db="EMBL/GenBank/DDBJ databases">
        <authorList>
            <consortium name="The Klebsiella pneumonia Genome Sequencing Project"/>
            <person name="McClelland M."/>
            <person name="Sanderson E.K."/>
            <person name="Spieth J."/>
            <person name="Clifton W.S."/>
            <person name="Latreille P."/>
            <person name="Sabo A."/>
            <person name="Pepin K."/>
            <person name="Bhonagiri V."/>
            <person name="Porwollik S."/>
            <person name="Ali J."/>
            <person name="Wilson R.K."/>
        </authorList>
    </citation>
    <scope>NUCLEOTIDE SEQUENCE [LARGE SCALE GENOMIC DNA]</scope>
    <source>
        <strain>ATCC 700721 / MGH 78578</strain>
    </source>
</reference>
<feature type="chain" id="PRO_1000051061" description="Small ribosomal subunit protein uS19">
    <location>
        <begin position="1"/>
        <end position="92"/>
    </location>
</feature>
<gene>
    <name evidence="1" type="primary">rpsS</name>
    <name type="ordered locus">KPN78578_36780</name>
    <name type="ORF">KPN_03715</name>
</gene>
<accession>A6TEW8</accession>
<evidence type="ECO:0000255" key="1">
    <source>
        <dbReference type="HAMAP-Rule" id="MF_00531"/>
    </source>
</evidence>
<evidence type="ECO:0000305" key="2"/>
<organism>
    <name type="scientific">Klebsiella pneumoniae subsp. pneumoniae (strain ATCC 700721 / MGH 78578)</name>
    <dbReference type="NCBI Taxonomy" id="272620"/>
    <lineage>
        <taxon>Bacteria</taxon>
        <taxon>Pseudomonadati</taxon>
        <taxon>Pseudomonadota</taxon>
        <taxon>Gammaproteobacteria</taxon>
        <taxon>Enterobacterales</taxon>
        <taxon>Enterobacteriaceae</taxon>
        <taxon>Klebsiella/Raoultella group</taxon>
        <taxon>Klebsiella</taxon>
        <taxon>Klebsiella pneumoniae complex</taxon>
    </lineage>
</organism>
<sequence length="92" mass="10416">MPRSLKKGPFIDLHLLKKVEKAVESGDKKPLRTWSRRSTIFPNMIGLTIAVHNGRQHVPVFVSDEMVGHKLGEFAPTRTYRGHAADKKAKKK</sequence>
<proteinExistence type="inferred from homology"/>
<comment type="function">
    <text evidence="1">Protein S19 forms a complex with S13 that binds strongly to the 16S ribosomal RNA.</text>
</comment>
<comment type="similarity">
    <text evidence="1">Belongs to the universal ribosomal protein uS19 family.</text>
</comment>